<organism>
    <name type="scientific">Bacillus subtilis (strain 168)</name>
    <dbReference type="NCBI Taxonomy" id="224308"/>
    <lineage>
        <taxon>Bacteria</taxon>
        <taxon>Bacillati</taxon>
        <taxon>Bacillota</taxon>
        <taxon>Bacilli</taxon>
        <taxon>Bacillales</taxon>
        <taxon>Bacillaceae</taxon>
        <taxon>Bacillus</taxon>
    </lineage>
</organism>
<feature type="chain" id="PRO_0000360551" description="HTH-type transcriptional regulator MhqR">
    <location>
        <begin position="1"/>
        <end position="145"/>
    </location>
</feature>
<feature type="domain" description="HTH marR-type" evidence="1">
    <location>
        <begin position="5"/>
        <end position="137"/>
    </location>
</feature>
<feature type="DNA-binding region" description="H-T-H motif" evidence="1">
    <location>
        <begin position="51"/>
        <end position="74"/>
    </location>
</feature>
<keyword id="KW-0238">DNA-binding</keyword>
<keyword id="KW-1185">Reference proteome</keyword>
<keyword id="KW-0678">Repressor</keyword>
<keyword id="KW-0804">Transcription</keyword>
<keyword id="KW-0805">Transcription regulation</keyword>
<reference key="1">
    <citation type="journal article" date="1997" name="Nature">
        <title>The complete genome sequence of the Gram-positive bacterium Bacillus subtilis.</title>
        <authorList>
            <person name="Kunst F."/>
            <person name="Ogasawara N."/>
            <person name="Moszer I."/>
            <person name="Albertini A.M."/>
            <person name="Alloni G."/>
            <person name="Azevedo V."/>
            <person name="Bertero M.G."/>
            <person name="Bessieres P."/>
            <person name="Bolotin A."/>
            <person name="Borchert S."/>
            <person name="Borriss R."/>
            <person name="Boursier L."/>
            <person name="Brans A."/>
            <person name="Braun M."/>
            <person name="Brignell S.C."/>
            <person name="Bron S."/>
            <person name="Brouillet S."/>
            <person name="Bruschi C.V."/>
            <person name="Caldwell B."/>
            <person name="Capuano V."/>
            <person name="Carter N.M."/>
            <person name="Choi S.-K."/>
            <person name="Codani J.-J."/>
            <person name="Connerton I.F."/>
            <person name="Cummings N.J."/>
            <person name="Daniel R.A."/>
            <person name="Denizot F."/>
            <person name="Devine K.M."/>
            <person name="Duesterhoeft A."/>
            <person name="Ehrlich S.D."/>
            <person name="Emmerson P.T."/>
            <person name="Entian K.-D."/>
            <person name="Errington J."/>
            <person name="Fabret C."/>
            <person name="Ferrari E."/>
            <person name="Foulger D."/>
            <person name="Fritz C."/>
            <person name="Fujita M."/>
            <person name="Fujita Y."/>
            <person name="Fuma S."/>
            <person name="Galizzi A."/>
            <person name="Galleron N."/>
            <person name="Ghim S.-Y."/>
            <person name="Glaser P."/>
            <person name="Goffeau A."/>
            <person name="Golightly E.J."/>
            <person name="Grandi G."/>
            <person name="Guiseppi G."/>
            <person name="Guy B.J."/>
            <person name="Haga K."/>
            <person name="Haiech J."/>
            <person name="Harwood C.R."/>
            <person name="Henaut A."/>
            <person name="Hilbert H."/>
            <person name="Holsappel S."/>
            <person name="Hosono S."/>
            <person name="Hullo M.-F."/>
            <person name="Itaya M."/>
            <person name="Jones L.-M."/>
            <person name="Joris B."/>
            <person name="Karamata D."/>
            <person name="Kasahara Y."/>
            <person name="Klaerr-Blanchard M."/>
            <person name="Klein C."/>
            <person name="Kobayashi Y."/>
            <person name="Koetter P."/>
            <person name="Koningstein G."/>
            <person name="Krogh S."/>
            <person name="Kumano M."/>
            <person name="Kurita K."/>
            <person name="Lapidus A."/>
            <person name="Lardinois S."/>
            <person name="Lauber J."/>
            <person name="Lazarevic V."/>
            <person name="Lee S.-M."/>
            <person name="Levine A."/>
            <person name="Liu H."/>
            <person name="Masuda S."/>
            <person name="Mauel C."/>
            <person name="Medigue C."/>
            <person name="Medina N."/>
            <person name="Mellado R.P."/>
            <person name="Mizuno M."/>
            <person name="Moestl D."/>
            <person name="Nakai S."/>
            <person name="Noback M."/>
            <person name="Noone D."/>
            <person name="O'Reilly M."/>
            <person name="Ogawa K."/>
            <person name="Ogiwara A."/>
            <person name="Oudega B."/>
            <person name="Park S.-H."/>
            <person name="Parro V."/>
            <person name="Pohl T.M."/>
            <person name="Portetelle D."/>
            <person name="Porwollik S."/>
            <person name="Prescott A.M."/>
            <person name="Presecan E."/>
            <person name="Pujic P."/>
            <person name="Purnelle B."/>
            <person name="Rapoport G."/>
            <person name="Rey M."/>
            <person name="Reynolds S."/>
            <person name="Rieger M."/>
            <person name="Rivolta C."/>
            <person name="Rocha E."/>
            <person name="Roche B."/>
            <person name="Rose M."/>
            <person name="Sadaie Y."/>
            <person name="Sato T."/>
            <person name="Scanlan E."/>
            <person name="Schleich S."/>
            <person name="Schroeter R."/>
            <person name="Scoffone F."/>
            <person name="Sekiguchi J."/>
            <person name="Sekowska A."/>
            <person name="Seror S.J."/>
            <person name="Serror P."/>
            <person name="Shin B.-S."/>
            <person name="Soldo B."/>
            <person name="Sorokin A."/>
            <person name="Tacconi E."/>
            <person name="Takagi T."/>
            <person name="Takahashi H."/>
            <person name="Takemaru K."/>
            <person name="Takeuchi M."/>
            <person name="Tamakoshi A."/>
            <person name="Tanaka T."/>
            <person name="Terpstra P."/>
            <person name="Tognoni A."/>
            <person name="Tosato V."/>
            <person name="Uchiyama S."/>
            <person name="Vandenbol M."/>
            <person name="Vannier F."/>
            <person name="Vassarotti A."/>
            <person name="Viari A."/>
            <person name="Wambutt R."/>
            <person name="Wedler E."/>
            <person name="Wedler H."/>
            <person name="Weitzenegger T."/>
            <person name="Winters P."/>
            <person name="Wipat A."/>
            <person name="Yamamoto H."/>
            <person name="Yamane K."/>
            <person name="Yasumoto K."/>
            <person name="Yata K."/>
            <person name="Yoshida K."/>
            <person name="Yoshikawa H.-F."/>
            <person name="Zumstein E."/>
            <person name="Yoshikawa H."/>
            <person name="Danchin A."/>
        </authorList>
    </citation>
    <scope>NUCLEOTIDE SEQUENCE [LARGE SCALE GENOMIC DNA]</scope>
    <source>
        <strain>168</strain>
    </source>
</reference>
<reference key="2">
    <citation type="journal article" date="2007" name="Mol. Microbiol.">
        <title>The MarR-type repressor MhqR (YkvE) regulates multiple dioxygenases/glyoxalases and an azoreductase which confer resistance to 2-methylhydroquinone and catechol in Bacillus subtilis.</title>
        <authorList>
            <person name="Toewe S."/>
            <person name="Leelakriangsak M."/>
            <person name="Kobayashi K."/>
            <person name="Van Duy N."/>
            <person name="Hecker M."/>
            <person name="Zuber P."/>
            <person name="Antelmann H."/>
        </authorList>
    </citation>
    <scope>FUNCTION</scope>
    <scope>INDUCTION</scope>
    <scope>NOMENCLATURE</scope>
    <source>
        <strain>168</strain>
    </source>
</reference>
<gene>
    <name type="primary">mhqR</name>
    <name type="synonym">ykvE</name>
    <name type="ordered locus">BSU13670</name>
</gene>
<comment type="function">
    <text evidence="2">Negatively regulates mhqA, mhqED, mhqNOP, and azoR2 which may contribute to the degradation of aromatic compounds.</text>
</comment>
<comment type="induction">
    <text evidence="2">Repressed by 2-methylhydroquinone (2-MHQ), diamide and catechol stress. Not subject to autorepression.</text>
</comment>
<proteinExistence type="evidence at transcript level"/>
<sequence length="145" mass="16567">MTEKSLKLFIVLSRAYRSINDHMNKHIHKHGLNPTEFAVLELLYHKGDQPLQQIGDKILLASGSITYVVDKLEQKELLIRKASPTDRRVTFAQITEKGIGLLNDIFPDHAAEIDEMISVLSEEEVEMCTEMLKRVGLNAKQFHNK</sequence>
<dbReference type="EMBL" id="AL009126">
    <property type="protein sequence ID" value="CAB13240.1"/>
    <property type="molecule type" value="Genomic_DNA"/>
</dbReference>
<dbReference type="PIR" id="G69867">
    <property type="entry name" value="G69867"/>
</dbReference>
<dbReference type="RefSeq" id="NP_389250.1">
    <property type="nucleotide sequence ID" value="NC_000964.3"/>
</dbReference>
<dbReference type="RefSeq" id="WP_003232475.1">
    <property type="nucleotide sequence ID" value="NZ_OZ025638.1"/>
</dbReference>
<dbReference type="SMR" id="O31672"/>
<dbReference type="FunCoup" id="O31672">
    <property type="interactions" value="123"/>
</dbReference>
<dbReference type="STRING" id="224308.BSU13670"/>
<dbReference type="jPOST" id="O31672"/>
<dbReference type="PaxDb" id="224308-BSU13670"/>
<dbReference type="EnsemblBacteria" id="CAB13240">
    <property type="protein sequence ID" value="CAB13240"/>
    <property type="gene ID" value="BSU_13670"/>
</dbReference>
<dbReference type="GeneID" id="86874138"/>
<dbReference type="GeneID" id="939303"/>
<dbReference type="KEGG" id="bsu:BSU13670"/>
<dbReference type="PATRIC" id="fig|224308.179.peg.1484"/>
<dbReference type="eggNOG" id="COG1846">
    <property type="taxonomic scope" value="Bacteria"/>
</dbReference>
<dbReference type="InParanoid" id="O31672"/>
<dbReference type="OrthoDB" id="9799747at2"/>
<dbReference type="PhylomeDB" id="O31672"/>
<dbReference type="BioCyc" id="BSUB:BSU13670-MONOMER"/>
<dbReference type="PRO" id="PR:O31672"/>
<dbReference type="Proteomes" id="UP000001570">
    <property type="component" value="Chromosome"/>
</dbReference>
<dbReference type="GO" id="GO:0003677">
    <property type="term" value="F:DNA binding"/>
    <property type="evidence" value="ECO:0007669"/>
    <property type="project" value="UniProtKB-KW"/>
</dbReference>
<dbReference type="GO" id="GO:0003700">
    <property type="term" value="F:DNA-binding transcription factor activity"/>
    <property type="evidence" value="ECO:0007669"/>
    <property type="project" value="InterPro"/>
</dbReference>
<dbReference type="GO" id="GO:0006355">
    <property type="term" value="P:regulation of DNA-templated transcription"/>
    <property type="evidence" value="ECO:0000318"/>
    <property type="project" value="GO_Central"/>
</dbReference>
<dbReference type="GO" id="GO:0006950">
    <property type="term" value="P:response to stress"/>
    <property type="evidence" value="ECO:0000318"/>
    <property type="project" value="GO_Central"/>
</dbReference>
<dbReference type="FunFam" id="1.10.10.10:FF:000226">
    <property type="entry name" value="MarR family transcriptional regulator"/>
    <property type="match status" value="1"/>
</dbReference>
<dbReference type="Gene3D" id="1.10.10.10">
    <property type="entry name" value="Winged helix-like DNA-binding domain superfamily/Winged helix DNA-binding domain"/>
    <property type="match status" value="1"/>
</dbReference>
<dbReference type="InterPro" id="IPR000835">
    <property type="entry name" value="HTH_MarR-typ"/>
</dbReference>
<dbReference type="InterPro" id="IPR023187">
    <property type="entry name" value="Tscrpt_reg_MarR-type_CS"/>
</dbReference>
<dbReference type="InterPro" id="IPR036388">
    <property type="entry name" value="WH-like_DNA-bd_sf"/>
</dbReference>
<dbReference type="InterPro" id="IPR036390">
    <property type="entry name" value="WH_DNA-bd_sf"/>
</dbReference>
<dbReference type="PANTHER" id="PTHR42756">
    <property type="entry name" value="TRANSCRIPTIONAL REGULATOR, MARR"/>
    <property type="match status" value="1"/>
</dbReference>
<dbReference type="PANTHER" id="PTHR42756:SF1">
    <property type="entry name" value="TRANSCRIPTIONAL REPRESSOR OF EMRAB OPERON"/>
    <property type="match status" value="1"/>
</dbReference>
<dbReference type="Pfam" id="PF01047">
    <property type="entry name" value="MarR"/>
    <property type="match status" value="1"/>
</dbReference>
<dbReference type="PRINTS" id="PR00598">
    <property type="entry name" value="HTHMARR"/>
</dbReference>
<dbReference type="SMART" id="SM00347">
    <property type="entry name" value="HTH_MARR"/>
    <property type="match status" value="1"/>
</dbReference>
<dbReference type="SUPFAM" id="SSF46785">
    <property type="entry name" value="Winged helix' DNA-binding domain"/>
    <property type="match status" value="1"/>
</dbReference>
<dbReference type="PROSITE" id="PS01117">
    <property type="entry name" value="HTH_MARR_1"/>
    <property type="match status" value="1"/>
</dbReference>
<dbReference type="PROSITE" id="PS50995">
    <property type="entry name" value="HTH_MARR_2"/>
    <property type="match status" value="1"/>
</dbReference>
<protein>
    <recommendedName>
        <fullName>HTH-type transcriptional regulator MhqR</fullName>
    </recommendedName>
</protein>
<name>MHQR_BACSU</name>
<evidence type="ECO:0000255" key="1">
    <source>
        <dbReference type="PROSITE-ProRule" id="PRU00345"/>
    </source>
</evidence>
<evidence type="ECO:0000269" key="2">
    <source>
    </source>
</evidence>
<accession>O31672</accession>